<comment type="function">
    <text evidence="2">Part of the ABC transporter complex PstSACB involved in phosphate import. Responsible for energy coupling to the transport system.</text>
</comment>
<comment type="catalytic activity">
    <reaction evidence="2">
        <text>phosphate(out) + ATP + H2O = ADP + 2 phosphate(in) + H(+)</text>
        <dbReference type="Rhea" id="RHEA:24440"/>
        <dbReference type="ChEBI" id="CHEBI:15377"/>
        <dbReference type="ChEBI" id="CHEBI:15378"/>
        <dbReference type="ChEBI" id="CHEBI:30616"/>
        <dbReference type="ChEBI" id="CHEBI:43474"/>
        <dbReference type="ChEBI" id="CHEBI:456216"/>
        <dbReference type="EC" id="7.3.2.1"/>
    </reaction>
</comment>
<comment type="subunit">
    <text evidence="2">The complex is composed of two ATP-binding proteins (PstB), two transmembrane proteins (PstC and PstA) and a solute-binding protein (PstS).</text>
</comment>
<comment type="subcellular location">
    <subcellularLocation>
        <location evidence="2">Cell inner membrane</location>
        <topology evidence="2">Peripheral membrane protein</topology>
    </subcellularLocation>
</comment>
<comment type="similarity">
    <text evidence="2">Belongs to the ABC transporter superfamily. Phosphate importer (TC 3.A.1.7) family.</text>
</comment>
<proteinExistence type="inferred from homology"/>
<evidence type="ECO:0000250" key="1"/>
<evidence type="ECO:0000255" key="2">
    <source>
        <dbReference type="HAMAP-Rule" id="MF_01702"/>
    </source>
</evidence>
<gene>
    <name evidence="2" type="primary">pstB</name>
    <name type="ordered locus">SDY_4025</name>
</gene>
<feature type="initiator methionine" description="Removed" evidence="1">
    <location>
        <position position="1"/>
    </location>
</feature>
<feature type="chain" id="PRO_0000272528" description="Phosphate import ATP-binding protein PstB">
    <location>
        <begin position="2"/>
        <end position="257"/>
    </location>
</feature>
<feature type="domain" description="ABC transporter" evidence="2">
    <location>
        <begin position="11"/>
        <end position="252"/>
    </location>
</feature>
<feature type="binding site" evidence="2">
    <location>
        <begin position="43"/>
        <end position="50"/>
    </location>
    <ligand>
        <name>ATP</name>
        <dbReference type="ChEBI" id="CHEBI:30616"/>
    </ligand>
</feature>
<accession>Q329R2</accession>
<keyword id="KW-0067">ATP-binding</keyword>
<keyword id="KW-0997">Cell inner membrane</keyword>
<keyword id="KW-1003">Cell membrane</keyword>
<keyword id="KW-0472">Membrane</keyword>
<keyword id="KW-0547">Nucleotide-binding</keyword>
<keyword id="KW-0592">Phosphate transport</keyword>
<keyword id="KW-1185">Reference proteome</keyword>
<keyword id="KW-1278">Translocase</keyword>
<keyword id="KW-0813">Transport</keyword>
<dbReference type="EC" id="7.3.2.1" evidence="2"/>
<dbReference type="EMBL" id="CP000034">
    <property type="protein sequence ID" value="ABB63943.1"/>
    <property type="molecule type" value="Genomic_DNA"/>
</dbReference>
<dbReference type="RefSeq" id="WP_000063125.1">
    <property type="nucleotide sequence ID" value="NC_007606.1"/>
</dbReference>
<dbReference type="RefSeq" id="YP_405434.1">
    <property type="nucleotide sequence ID" value="NC_007606.1"/>
</dbReference>
<dbReference type="SMR" id="Q329R2"/>
<dbReference type="STRING" id="300267.SDY_4025"/>
<dbReference type="EnsemblBacteria" id="ABB63943">
    <property type="protein sequence ID" value="ABB63943"/>
    <property type="gene ID" value="SDY_4025"/>
</dbReference>
<dbReference type="GeneID" id="93778212"/>
<dbReference type="KEGG" id="sdy:SDY_4025"/>
<dbReference type="PATRIC" id="fig|300267.13.peg.4739"/>
<dbReference type="HOGENOM" id="CLU_000604_1_22_6"/>
<dbReference type="Proteomes" id="UP000002716">
    <property type="component" value="Chromosome"/>
</dbReference>
<dbReference type="GO" id="GO:0005886">
    <property type="term" value="C:plasma membrane"/>
    <property type="evidence" value="ECO:0007669"/>
    <property type="project" value="UniProtKB-SubCell"/>
</dbReference>
<dbReference type="GO" id="GO:0005524">
    <property type="term" value="F:ATP binding"/>
    <property type="evidence" value="ECO:0007669"/>
    <property type="project" value="UniProtKB-KW"/>
</dbReference>
<dbReference type="GO" id="GO:0016887">
    <property type="term" value="F:ATP hydrolysis activity"/>
    <property type="evidence" value="ECO:0007669"/>
    <property type="project" value="InterPro"/>
</dbReference>
<dbReference type="GO" id="GO:0015415">
    <property type="term" value="F:ATPase-coupled phosphate ion transmembrane transporter activity"/>
    <property type="evidence" value="ECO:0007669"/>
    <property type="project" value="UniProtKB-EC"/>
</dbReference>
<dbReference type="GO" id="GO:0035435">
    <property type="term" value="P:phosphate ion transmembrane transport"/>
    <property type="evidence" value="ECO:0007669"/>
    <property type="project" value="InterPro"/>
</dbReference>
<dbReference type="CDD" id="cd03260">
    <property type="entry name" value="ABC_PstB_phosphate_transporter"/>
    <property type="match status" value="1"/>
</dbReference>
<dbReference type="FunFam" id="3.40.50.300:FF:000132">
    <property type="entry name" value="Phosphate import ATP-binding protein PstB"/>
    <property type="match status" value="1"/>
</dbReference>
<dbReference type="Gene3D" id="3.40.50.300">
    <property type="entry name" value="P-loop containing nucleotide triphosphate hydrolases"/>
    <property type="match status" value="1"/>
</dbReference>
<dbReference type="InterPro" id="IPR003593">
    <property type="entry name" value="AAA+_ATPase"/>
</dbReference>
<dbReference type="InterPro" id="IPR003439">
    <property type="entry name" value="ABC_transporter-like_ATP-bd"/>
</dbReference>
<dbReference type="InterPro" id="IPR017871">
    <property type="entry name" value="ABC_transporter-like_CS"/>
</dbReference>
<dbReference type="InterPro" id="IPR027417">
    <property type="entry name" value="P-loop_NTPase"/>
</dbReference>
<dbReference type="InterPro" id="IPR005670">
    <property type="entry name" value="PstB-like"/>
</dbReference>
<dbReference type="NCBIfam" id="TIGR00972">
    <property type="entry name" value="3a0107s01c2"/>
    <property type="match status" value="1"/>
</dbReference>
<dbReference type="PANTHER" id="PTHR43423">
    <property type="entry name" value="ABC TRANSPORTER I FAMILY MEMBER 17"/>
    <property type="match status" value="1"/>
</dbReference>
<dbReference type="PANTHER" id="PTHR43423:SF3">
    <property type="entry name" value="PHOSPHATE IMPORT ATP-BINDING PROTEIN PSTB"/>
    <property type="match status" value="1"/>
</dbReference>
<dbReference type="Pfam" id="PF00005">
    <property type="entry name" value="ABC_tran"/>
    <property type="match status" value="1"/>
</dbReference>
<dbReference type="SMART" id="SM00382">
    <property type="entry name" value="AAA"/>
    <property type="match status" value="1"/>
</dbReference>
<dbReference type="SUPFAM" id="SSF52540">
    <property type="entry name" value="P-loop containing nucleoside triphosphate hydrolases"/>
    <property type="match status" value="1"/>
</dbReference>
<dbReference type="PROSITE" id="PS00211">
    <property type="entry name" value="ABC_TRANSPORTER_1"/>
    <property type="match status" value="1"/>
</dbReference>
<dbReference type="PROSITE" id="PS50893">
    <property type="entry name" value="ABC_TRANSPORTER_2"/>
    <property type="match status" value="1"/>
</dbReference>
<dbReference type="PROSITE" id="PS51238">
    <property type="entry name" value="PSTB"/>
    <property type="match status" value="1"/>
</dbReference>
<name>PSTB_SHIDS</name>
<sequence>MSMVETAPSKIQVRNLNFYYGKFHALKNINLDIAKNQVTAFIGPSGCGKSTLLRTFNKMFELYPEQRAEGEILLDGDNILTNSQDIALLRAKVGMVFQKPTPFPMSIYDNIAFGVRLFEKLSRADMDERVQWALTKAALWNETKDKLHQSGYSLSGGQQQRLCIARGIAIRPEVLLLDEPCSALDPISTGRIEELITELKQDYTVVIVTHNMQQAARCSDHTAFMYLGELIEFSNTDDLFTKPAKKQTEDYITGRYG</sequence>
<protein>
    <recommendedName>
        <fullName evidence="2">Phosphate import ATP-binding protein PstB</fullName>
        <ecNumber evidence="2">7.3.2.1</ecNumber>
    </recommendedName>
    <alternativeName>
        <fullName evidence="2">ABC phosphate transporter</fullName>
    </alternativeName>
    <alternativeName>
        <fullName evidence="2">Phosphate-transporting ATPase</fullName>
    </alternativeName>
</protein>
<organism>
    <name type="scientific">Shigella dysenteriae serotype 1 (strain Sd197)</name>
    <dbReference type="NCBI Taxonomy" id="300267"/>
    <lineage>
        <taxon>Bacteria</taxon>
        <taxon>Pseudomonadati</taxon>
        <taxon>Pseudomonadota</taxon>
        <taxon>Gammaproteobacteria</taxon>
        <taxon>Enterobacterales</taxon>
        <taxon>Enterobacteriaceae</taxon>
        <taxon>Shigella</taxon>
    </lineage>
</organism>
<reference key="1">
    <citation type="journal article" date="2005" name="Nucleic Acids Res.">
        <title>Genome dynamics and diversity of Shigella species, the etiologic agents of bacillary dysentery.</title>
        <authorList>
            <person name="Yang F."/>
            <person name="Yang J."/>
            <person name="Zhang X."/>
            <person name="Chen L."/>
            <person name="Jiang Y."/>
            <person name="Yan Y."/>
            <person name="Tang X."/>
            <person name="Wang J."/>
            <person name="Xiong Z."/>
            <person name="Dong J."/>
            <person name="Xue Y."/>
            <person name="Zhu Y."/>
            <person name="Xu X."/>
            <person name="Sun L."/>
            <person name="Chen S."/>
            <person name="Nie H."/>
            <person name="Peng J."/>
            <person name="Xu J."/>
            <person name="Wang Y."/>
            <person name="Yuan Z."/>
            <person name="Wen Y."/>
            <person name="Yao Z."/>
            <person name="Shen Y."/>
            <person name="Qiang B."/>
            <person name="Hou Y."/>
            <person name="Yu J."/>
            <person name="Jin Q."/>
        </authorList>
    </citation>
    <scope>NUCLEOTIDE SEQUENCE [LARGE SCALE GENOMIC DNA]</scope>
    <source>
        <strain>Sd197</strain>
    </source>
</reference>